<organism>
    <name type="scientific">Oryctolagus cuniculus</name>
    <name type="common">Rabbit</name>
    <dbReference type="NCBI Taxonomy" id="9986"/>
    <lineage>
        <taxon>Eukaryota</taxon>
        <taxon>Metazoa</taxon>
        <taxon>Chordata</taxon>
        <taxon>Craniata</taxon>
        <taxon>Vertebrata</taxon>
        <taxon>Euteleostomi</taxon>
        <taxon>Mammalia</taxon>
        <taxon>Eutheria</taxon>
        <taxon>Euarchontoglires</taxon>
        <taxon>Glires</taxon>
        <taxon>Lagomorpha</taxon>
        <taxon>Leporidae</taxon>
        <taxon>Oryctolagus</taxon>
    </lineage>
</organism>
<protein>
    <recommendedName>
        <fullName evidence="2">Fibronectin</fullName>
        <shortName>FN</shortName>
    </recommendedName>
</protein>
<evidence type="ECO:0000250" key="1"/>
<evidence type="ECO:0000250" key="2">
    <source>
        <dbReference type="UniProtKB" id="P02751"/>
    </source>
</evidence>
<evidence type="ECO:0000250" key="3">
    <source>
        <dbReference type="UniProtKB" id="P07589"/>
    </source>
</evidence>
<evidence type="ECO:0000250" key="4">
    <source>
        <dbReference type="UniProtKB" id="P11276"/>
    </source>
</evidence>
<evidence type="ECO:0000255" key="5"/>
<evidence type="ECO:0000255" key="6">
    <source>
        <dbReference type="PROSITE-ProRule" id="PRU00316"/>
    </source>
</evidence>
<evidence type="ECO:0000255" key="7">
    <source>
        <dbReference type="PROSITE-ProRule" id="PRU00478"/>
    </source>
</evidence>
<evidence type="ECO:0000255" key="8">
    <source>
        <dbReference type="PROSITE-ProRule" id="PRU00479"/>
    </source>
</evidence>
<evidence type="ECO:0000255" key="9">
    <source>
        <dbReference type="PROSITE-ProRule" id="PRU00498"/>
    </source>
</evidence>
<evidence type="ECO:0000256" key="10">
    <source>
        <dbReference type="SAM" id="MobiDB-lite"/>
    </source>
</evidence>
<evidence type="ECO:0000269" key="11">
    <source>
    </source>
</evidence>
<evidence type="ECO:0000305" key="12"/>
<keyword id="KW-0011">Acute phase</keyword>
<keyword id="KW-0025">Alternative splicing</keyword>
<keyword id="KW-0130">Cell adhesion</keyword>
<keyword id="KW-0133">Cell shape</keyword>
<keyword id="KW-1015">Disulfide bond</keyword>
<keyword id="KW-0238">DNA-binding</keyword>
<keyword id="KW-0272">Extracellular matrix</keyword>
<keyword id="KW-0325">Glycoprotein</keyword>
<keyword id="KW-0358">Heparin-binding</keyword>
<keyword id="KW-0558">Oxidation</keyword>
<keyword id="KW-0597">Phosphoprotein</keyword>
<keyword id="KW-1185">Reference proteome</keyword>
<keyword id="KW-0677">Repeat</keyword>
<keyword id="KW-0964">Secreted</keyword>
<keyword id="KW-0765">Sulfation</keyword>
<reference key="1">
    <citation type="journal article" date="2011" name="Nature">
        <title>A high-resolution map of human evolutionary constraint using 29 mammals.</title>
        <authorList>
            <person name="Lindblad-Toh K."/>
            <person name="Garber M."/>
            <person name="Zuk O."/>
            <person name="Lin M.F."/>
            <person name="Parker B.J."/>
            <person name="Washietl S."/>
            <person name="Kheradpour P."/>
            <person name="Ernst J."/>
            <person name="Jordan G."/>
            <person name="Mauceli E."/>
            <person name="Ward L.D."/>
            <person name="Lowe C.B."/>
            <person name="Holloway A.K."/>
            <person name="Clamp M."/>
            <person name="Gnerre S."/>
            <person name="Alfoldi J."/>
            <person name="Beal K."/>
            <person name="Chang J."/>
            <person name="Clawson H."/>
            <person name="Cuff J."/>
            <person name="Di Palma F."/>
            <person name="Fitzgerald S."/>
            <person name="Flicek P."/>
            <person name="Guttman M."/>
            <person name="Hubisz M.J."/>
            <person name="Jaffe D.B."/>
            <person name="Jungreis I."/>
            <person name="Kent W.J."/>
            <person name="Kostka D."/>
            <person name="Lara M."/>
            <person name="Martins A.L."/>
            <person name="Massingham T."/>
            <person name="Moltke I."/>
            <person name="Raney B.J."/>
            <person name="Rasmussen M.D."/>
            <person name="Robinson J."/>
            <person name="Stark A."/>
            <person name="Vilella A.J."/>
            <person name="Wen J."/>
            <person name="Xie X."/>
            <person name="Zody M.C."/>
            <person name="Baldwin J."/>
            <person name="Bloom T."/>
            <person name="Chin C.W."/>
            <person name="Heiman D."/>
            <person name="Nicol R."/>
            <person name="Nusbaum C."/>
            <person name="Young S."/>
            <person name="Wilkinson J."/>
            <person name="Worley K.C."/>
            <person name="Kovar C.L."/>
            <person name="Muzny D.M."/>
            <person name="Gibbs R.A."/>
            <person name="Cree A."/>
            <person name="Dihn H.H."/>
            <person name="Fowler G."/>
            <person name="Jhangiani S."/>
            <person name="Joshi V."/>
            <person name="Lee S."/>
            <person name="Lewis L.R."/>
            <person name="Nazareth L.V."/>
            <person name="Okwuonu G."/>
            <person name="Santibanez J."/>
            <person name="Warren W.C."/>
            <person name="Mardis E.R."/>
            <person name="Weinstock G.M."/>
            <person name="Wilson R.K."/>
            <person name="Delehaunty K."/>
            <person name="Dooling D."/>
            <person name="Fronik C."/>
            <person name="Fulton L."/>
            <person name="Fulton B."/>
            <person name="Graves T."/>
            <person name="Minx P."/>
            <person name="Sodergren E."/>
            <person name="Birney E."/>
            <person name="Margulies E.H."/>
            <person name="Herrero J."/>
            <person name="Green E.D."/>
            <person name="Haussler D."/>
            <person name="Siepel A."/>
            <person name="Goldman N."/>
            <person name="Pollard K.S."/>
            <person name="Pedersen J.S."/>
            <person name="Lander E.S."/>
            <person name="Kellis M."/>
        </authorList>
    </citation>
    <scope>NUCLEOTIDE SEQUENCE [LARGE SCALE GENOMIC DNA]</scope>
    <source>
        <strain>Thorbecke inbred</strain>
    </source>
</reference>
<reference key="2">
    <citation type="journal article" date="1995" name="J. Am. Soc. Nephrol.">
        <title>Fibronectin mRNA in the developing glomerular crescent in rabbit antiglomerular basement membrane disease.</title>
        <authorList>
            <person name="Sady S.P."/>
            <person name="Goyal M."/>
            <person name="Thomas P.E."/>
            <person name="Wharram B.L."/>
            <person name="Wiggins R.C."/>
        </authorList>
    </citation>
    <scope>NUCLEOTIDE SEQUENCE [MRNA] OF 2328-2427</scope>
    <scope>TISSUE SPECIFICITY</scope>
</reference>
<feature type="chain" id="PRO_0000158531" description="Fibronectin">
    <location>
        <begin position="1" status="less than"/>
        <end position="2427"/>
    </location>
</feature>
<feature type="domain" description="Fibronectin type-I 1" evidence="7">
    <location>
        <begin position="1" status="less than"/>
        <end position="40"/>
    </location>
</feature>
<feature type="domain" description="Fibronectin type-I 2" evidence="7">
    <location>
        <begin position="45"/>
        <end position="88"/>
    </location>
</feature>
<feature type="domain" description="Fibronectin type-I 3" evidence="7">
    <location>
        <begin position="89"/>
        <end position="132"/>
    </location>
</feature>
<feature type="domain" description="Fibronectin type-I 4" evidence="7">
    <location>
        <begin position="134"/>
        <end position="178"/>
    </location>
</feature>
<feature type="domain" description="Fibronectin type-I 5" evidence="7">
    <location>
        <begin position="179"/>
        <end position="223"/>
    </location>
</feature>
<feature type="domain" description="Fibronectin type-I 6" evidence="7">
    <location>
        <begin position="256"/>
        <end position="295"/>
    </location>
</feature>
<feature type="domain" description="Fibronectin type-II 1" evidence="8">
    <location>
        <begin position="305"/>
        <end position="353"/>
    </location>
</feature>
<feature type="domain" description="Fibronectin type-II 2" evidence="8">
    <location>
        <begin position="365"/>
        <end position="413"/>
    </location>
</feature>
<feature type="domain" description="Fibronectin type-I 7" evidence="7">
    <location>
        <begin position="418"/>
        <end position="461"/>
    </location>
</feature>
<feature type="domain" description="Fibronectin type-I 8" evidence="7">
    <location>
        <begin position="466"/>
        <end position="508"/>
    </location>
</feature>
<feature type="domain" description="Fibronectin type-I 9" evidence="7">
    <location>
        <begin position="509"/>
        <end position="552"/>
    </location>
</feature>
<feature type="domain" description="Fibronectin type-III 1" evidence="6">
    <location>
        <begin position="560"/>
        <end position="653"/>
    </location>
</feature>
<feature type="domain" description="Fibronectin type-III 2" evidence="6">
    <location>
        <begin position="667"/>
        <end position="762"/>
    </location>
</feature>
<feature type="domain" description="Fibronectin type-III 3" evidence="6">
    <location>
        <begin position="763"/>
        <end position="852"/>
    </location>
</feature>
<feature type="domain" description="Fibronectin type-III 4" evidence="6">
    <location>
        <begin position="859"/>
        <end position="948"/>
    </location>
</feature>
<feature type="domain" description="Fibronectin type-III 5" evidence="6">
    <location>
        <begin position="949"/>
        <end position="1038"/>
    </location>
</feature>
<feature type="domain" description="Fibronectin type-III 6" evidence="6">
    <location>
        <begin position="1039"/>
        <end position="1125"/>
    </location>
</feature>
<feature type="domain" description="Fibronectin type-III 7" evidence="6">
    <location>
        <begin position="1126"/>
        <end position="1220"/>
    </location>
</feature>
<feature type="domain" description="Fibronectin type-III 8; extra domain B" evidence="6">
    <location>
        <begin position="1221"/>
        <end position="1309"/>
    </location>
</feature>
<feature type="domain" description="Fibronectin type-III 9" evidence="6">
    <location>
        <begin position="1310"/>
        <end position="1402"/>
    </location>
</feature>
<feature type="domain" description="Fibronectin type-III 10" evidence="6">
    <location>
        <begin position="1403"/>
        <end position="1490"/>
    </location>
</feature>
<feature type="domain" description="Fibronectin type-III 11" evidence="6">
    <location>
        <begin position="1491"/>
        <end position="1584"/>
    </location>
</feature>
<feature type="domain" description="Fibronectin type-III 12" evidence="6">
    <location>
        <begin position="1585"/>
        <end position="1676"/>
    </location>
</feature>
<feature type="domain" description="Fibronectin type-III 13; extra domain A" evidence="6">
    <location>
        <begin position="1677"/>
        <end position="1764"/>
    </location>
</feature>
<feature type="domain" description="Fibronectin type-III 14" evidence="6">
    <location>
        <begin position="1765"/>
        <end position="1858"/>
    </location>
</feature>
<feature type="domain" description="Fibronectin type-III 15" evidence="6">
    <location>
        <begin position="1859"/>
        <end position="1945"/>
    </location>
</feature>
<feature type="domain" description="Fibronectin type-III 16" evidence="6">
    <location>
        <begin position="1946"/>
        <end position="2036"/>
    </location>
</feature>
<feature type="domain" description="Fibronectin type-III 17" evidence="6">
    <location>
        <begin position="2144"/>
        <end position="2238"/>
    </location>
</feature>
<feature type="domain" description="Fibronectin type-I 10" evidence="7">
    <location>
        <begin position="2245"/>
        <end position="2289"/>
    </location>
</feature>
<feature type="domain" description="Fibronectin type-I 11" evidence="7">
    <location>
        <begin position="2290"/>
        <end position="2332"/>
    </location>
</feature>
<feature type="domain" description="Fibronectin type-I 12" evidence="7">
    <location>
        <begin position="2334"/>
        <end position="2374"/>
    </location>
</feature>
<feature type="DNA-binding region" evidence="2">
    <location>
        <begin position="857"/>
        <end position="1122"/>
    </location>
</feature>
<feature type="region of interest" description="Fibrin- and heparin-binding 1" evidence="2">
    <location>
        <begin position="2"/>
        <end position="222"/>
    </location>
</feature>
<feature type="region of interest" description="Collagen-binding" evidence="2">
    <location>
        <begin position="258"/>
        <end position="558"/>
    </location>
</feature>
<feature type="region of interest" description="Critical for collagen binding" evidence="2">
    <location>
        <begin position="414"/>
        <end position="427"/>
    </location>
</feature>
<feature type="region of interest" description="Cell-attachment" evidence="2">
    <location>
        <begin position="1308"/>
        <end position="1581"/>
    </location>
</feature>
<feature type="region of interest" description="Disordered" evidence="10">
    <location>
        <begin position="1610"/>
        <end position="1634"/>
    </location>
</feature>
<feature type="region of interest" description="Heparin-binding 2" evidence="2">
    <location>
        <begin position="1762"/>
        <end position="2032"/>
    </location>
</feature>
<feature type="region of interest" description="Binds to FBLN1" evidence="2">
    <location>
        <begin position="1854"/>
        <end position="2032"/>
    </location>
</feature>
<feature type="region of interest" description="V region (type III connecting segment, IIICS)" evidence="2">
    <location>
        <begin position="2033"/>
        <end position="2152"/>
    </location>
</feature>
<feature type="region of interest" description="Fibrin-binding 2" evidence="2">
    <location>
        <begin position="2247"/>
        <end position="2378"/>
    </location>
</feature>
<feature type="short sequence motif" description="Cell attachment site" evidence="2">
    <location>
        <begin position="1565"/>
        <end position="1567"/>
    </location>
</feature>
<feature type="compositionally biased region" description="Polar residues" evidence="10">
    <location>
        <begin position="1610"/>
        <end position="1620"/>
    </location>
</feature>
<feature type="site" description="Important for superfibronectin formation" evidence="2">
    <location>
        <position position="613"/>
    </location>
</feature>
<feature type="site" description="Important for superfibronectin formation" evidence="2">
    <location>
        <position position="616"/>
    </location>
</feature>
<feature type="modified residue" description="Sulfotyrosine" evidence="5">
    <location>
        <position position="826"/>
    </location>
</feature>
<feature type="modified residue" description="Sulfotyrosine" evidence="5">
    <location>
        <position position="831"/>
    </location>
</feature>
<feature type="modified residue" description="Phosphothreonine" evidence="2">
    <location>
        <position position="2404"/>
    </location>
</feature>
<feature type="modified residue" description="Phosphoserine" evidence="2">
    <location>
        <position position="2425"/>
    </location>
</feature>
<feature type="glycosylation site" description="N-linked (GlcNAc...) asparagine" evidence="9">
    <location>
        <position position="380"/>
    </location>
</feature>
<feature type="glycosylation site" description="N-linked (GlcNAc...) asparagine" evidence="9">
    <location>
        <position position="478"/>
    </location>
</feature>
<feature type="glycosylation site" description="N-linked (GlcNAc...) asparagine" evidence="9">
    <location>
        <position position="492"/>
    </location>
</feature>
<feature type="glycosylation site" description="N-linked (GlcNAc...) asparagine" evidence="9">
    <location>
        <position position="827"/>
    </location>
</feature>
<feature type="glycosylation site" description="N-linked (GlcNAc...) asparagine" evidence="9">
    <location>
        <position position="957"/>
    </location>
</feature>
<feature type="glycosylation site" description="N-linked (GlcNAc...) asparagine" evidence="5">
    <location>
        <position position="1023"/>
    </location>
</feature>
<feature type="glycosylation site" description="N-linked (GlcNAc...) asparagine" evidence="5">
    <location>
        <position position="1186"/>
    </location>
</feature>
<feature type="glycosylation site" description="N-linked (GlcNAc...) asparagine" evidence="9">
    <location>
        <position position="1194"/>
    </location>
</feature>
<feature type="glycosylation site" description="N-linked (GlcNAc...) asparagine" evidence="9">
    <location>
        <position position="1241"/>
    </location>
</feature>
<feature type="glycosylation site" description="N-linked (GlcNAc...) asparagine" evidence="5">
    <location>
        <position position="1854"/>
    </location>
</feature>
<feature type="glycosylation site" description="N-linked (GlcNAc...) asparagine" evidence="9">
    <location>
        <position position="2149"/>
    </location>
</feature>
<feature type="disulfide bond" evidence="7">
    <location>
        <begin position="2"/>
        <end position="28"/>
    </location>
</feature>
<feature type="disulfide bond" evidence="7">
    <location>
        <begin position="26"/>
        <end position="37"/>
    </location>
</feature>
<feature type="disulfide bond" evidence="7">
    <location>
        <begin position="47"/>
        <end position="75"/>
    </location>
</feature>
<feature type="disulfide bond" evidence="7">
    <location>
        <begin position="73"/>
        <end position="85"/>
    </location>
</feature>
<feature type="disulfide bond" evidence="7">
    <location>
        <begin position="91"/>
        <end position="119"/>
    </location>
</feature>
<feature type="disulfide bond" evidence="7">
    <location>
        <begin position="117"/>
        <end position="129"/>
    </location>
</feature>
<feature type="disulfide bond" evidence="7">
    <location>
        <begin position="136"/>
        <end position="165"/>
    </location>
</feature>
<feature type="disulfide bond" evidence="7">
    <location>
        <begin position="163"/>
        <end position="175"/>
    </location>
</feature>
<feature type="disulfide bond" evidence="7">
    <location>
        <begin position="181"/>
        <end position="210"/>
    </location>
</feature>
<feature type="disulfide bond" evidence="7">
    <location>
        <begin position="208"/>
        <end position="220"/>
    </location>
</feature>
<feature type="disulfide bond" evidence="7">
    <location>
        <begin position="258"/>
        <end position="285"/>
    </location>
</feature>
<feature type="disulfide bond" evidence="7">
    <location>
        <begin position="283"/>
        <end position="292"/>
    </location>
</feature>
<feature type="disulfide bond" evidence="8">
    <location>
        <begin position="310"/>
        <end position="336"/>
    </location>
</feature>
<feature type="disulfide bond" evidence="8">
    <location>
        <begin position="324"/>
        <end position="351"/>
    </location>
</feature>
<feature type="disulfide bond" evidence="8">
    <location>
        <begin position="370"/>
        <end position="396"/>
    </location>
</feature>
<feature type="disulfide bond" evidence="8">
    <location>
        <begin position="384"/>
        <end position="411"/>
    </location>
</feature>
<feature type="disulfide bond" evidence="7">
    <location>
        <begin position="420"/>
        <end position="448"/>
    </location>
</feature>
<feature type="disulfide bond" evidence="7">
    <location>
        <begin position="446"/>
        <end position="458"/>
    </location>
</feature>
<feature type="disulfide bond" evidence="7">
    <location>
        <begin position="468"/>
        <end position="495"/>
    </location>
</feature>
<feature type="disulfide bond" evidence="7">
    <location>
        <begin position="493"/>
        <end position="505"/>
    </location>
</feature>
<feature type="disulfide bond" evidence="7">
    <location>
        <begin position="511"/>
        <end position="539"/>
    </location>
</feature>
<feature type="disulfide bond" evidence="7">
    <location>
        <begin position="537"/>
        <end position="549"/>
    </location>
</feature>
<feature type="disulfide bond" evidence="7">
    <location>
        <begin position="2247"/>
        <end position="2276"/>
    </location>
</feature>
<feature type="disulfide bond" evidence="7">
    <location>
        <begin position="2274"/>
        <end position="2286"/>
    </location>
</feature>
<feature type="disulfide bond" evidence="7">
    <location>
        <begin position="2292"/>
        <end position="2319"/>
    </location>
</feature>
<feature type="disulfide bond" evidence="7">
    <location>
        <begin position="2317"/>
        <end position="2329"/>
    </location>
</feature>
<feature type="disulfide bond" evidence="7">
    <location>
        <begin position="2336"/>
        <end position="2362"/>
    </location>
</feature>
<feature type="disulfide bond" evidence="7">
    <location>
        <begin position="2360"/>
        <end position="2371"/>
    </location>
</feature>
<feature type="non-terminal residue">
    <location>
        <position position="1"/>
    </location>
</feature>
<dbReference type="EMBL" id="AAGW02042615">
    <property type="status" value="NOT_ANNOTATED_CDS"/>
    <property type="molecule type" value="Genomic_DNA"/>
</dbReference>
<dbReference type="EMBL" id="S80206">
    <property type="protein sequence ID" value="AAB35493.1"/>
    <property type="molecule type" value="mRNA"/>
</dbReference>
<dbReference type="SMR" id="Q28749"/>
<dbReference type="FunCoup" id="Q28749">
    <property type="interactions" value="139"/>
</dbReference>
<dbReference type="STRING" id="9986.ENSOCUP00000008718"/>
<dbReference type="GlyCosmos" id="Q28749">
    <property type="glycosylation" value="11 sites, No reported glycans"/>
</dbReference>
<dbReference type="PaxDb" id="9986-ENSOCUP00000008718"/>
<dbReference type="Ensembl" id="ENSOCUT00000010116.3">
    <molecule id="Q28749-1"/>
    <property type="protein sequence ID" value="ENSOCUP00000008718.2"/>
    <property type="gene ID" value="ENSOCUG00000010104.4"/>
</dbReference>
<dbReference type="eggNOG" id="ENOG502QPTS">
    <property type="taxonomic scope" value="Eukaryota"/>
</dbReference>
<dbReference type="GeneTree" id="ENSGT00940000155126"/>
<dbReference type="HOGENOM" id="CLU_000916_0_0_1"/>
<dbReference type="InParanoid" id="Q28749"/>
<dbReference type="OMA" id="GHCITDS"/>
<dbReference type="TreeFam" id="TF329915"/>
<dbReference type="Proteomes" id="UP000001811">
    <property type="component" value="Chromosome 7"/>
</dbReference>
<dbReference type="Bgee" id="ENSOCUG00000010104">
    <property type="expression patterns" value="Expressed in upper lobe of left lung and 15 other cell types or tissues"/>
</dbReference>
<dbReference type="GO" id="GO:0016324">
    <property type="term" value="C:apical plasma membrane"/>
    <property type="evidence" value="ECO:0007669"/>
    <property type="project" value="Ensembl"/>
</dbReference>
<dbReference type="GO" id="GO:0005604">
    <property type="term" value="C:basement membrane"/>
    <property type="evidence" value="ECO:0007669"/>
    <property type="project" value="Ensembl"/>
</dbReference>
<dbReference type="GO" id="GO:0005793">
    <property type="term" value="C:endoplasmic reticulum-Golgi intermediate compartment"/>
    <property type="evidence" value="ECO:0007669"/>
    <property type="project" value="Ensembl"/>
</dbReference>
<dbReference type="GO" id="GO:0070062">
    <property type="term" value="C:extracellular exosome"/>
    <property type="evidence" value="ECO:0007669"/>
    <property type="project" value="Ensembl"/>
</dbReference>
<dbReference type="GO" id="GO:0005577">
    <property type="term" value="C:fibrinogen complex"/>
    <property type="evidence" value="ECO:0007669"/>
    <property type="project" value="Ensembl"/>
</dbReference>
<dbReference type="GO" id="GO:0003677">
    <property type="term" value="F:DNA binding"/>
    <property type="evidence" value="ECO:0007669"/>
    <property type="project" value="UniProtKB-KW"/>
</dbReference>
<dbReference type="GO" id="GO:0005201">
    <property type="term" value="F:extracellular matrix structural constituent"/>
    <property type="evidence" value="ECO:0007669"/>
    <property type="project" value="TreeGrafter"/>
</dbReference>
<dbReference type="GO" id="GO:0008201">
    <property type="term" value="F:heparin binding"/>
    <property type="evidence" value="ECO:0007669"/>
    <property type="project" value="UniProtKB-KW"/>
</dbReference>
<dbReference type="GO" id="GO:0042802">
    <property type="term" value="F:identical protein binding"/>
    <property type="evidence" value="ECO:0007669"/>
    <property type="project" value="Ensembl"/>
</dbReference>
<dbReference type="GO" id="GO:0005178">
    <property type="term" value="F:integrin binding"/>
    <property type="evidence" value="ECO:0007669"/>
    <property type="project" value="Ensembl"/>
</dbReference>
<dbReference type="GO" id="GO:0016504">
    <property type="term" value="F:peptidase activator activity"/>
    <property type="evidence" value="ECO:0007669"/>
    <property type="project" value="Ensembl"/>
</dbReference>
<dbReference type="GO" id="GO:0002020">
    <property type="term" value="F:protease binding"/>
    <property type="evidence" value="ECO:0007669"/>
    <property type="project" value="Ensembl"/>
</dbReference>
<dbReference type="GO" id="GO:0043394">
    <property type="term" value="F:proteoglycan binding"/>
    <property type="evidence" value="ECO:0007669"/>
    <property type="project" value="Ensembl"/>
</dbReference>
<dbReference type="GO" id="GO:0048018">
    <property type="term" value="F:receptor ligand activity"/>
    <property type="evidence" value="ECO:0007669"/>
    <property type="project" value="Ensembl"/>
</dbReference>
<dbReference type="GO" id="GO:0006953">
    <property type="term" value="P:acute-phase response"/>
    <property type="evidence" value="ECO:0007669"/>
    <property type="project" value="UniProtKB-KW"/>
</dbReference>
<dbReference type="GO" id="GO:0051702">
    <property type="term" value="P:biological process involved in interaction with symbiont"/>
    <property type="evidence" value="ECO:0007669"/>
    <property type="project" value="Ensembl"/>
</dbReference>
<dbReference type="GO" id="GO:0007161">
    <property type="term" value="P:calcium-independent cell-matrix adhesion"/>
    <property type="evidence" value="ECO:0007669"/>
    <property type="project" value="Ensembl"/>
</dbReference>
<dbReference type="GO" id="GO:0007044">
    <property type="term" value="P:cell-substrate junction assembly"/>
    <property type="evidence" value="ECO:0007669"/>
    <property type="project" value="Ensembl"/>
</dbReference>
<dbReference type="GO" id="GO:0035987">
    <property type="term" value="P:endodermal cell differentiation"/>
    <property type="evidence" value="ECO:0007669"/>
    <property type="project" value="Ensembl"/>
</dbReference>
<dbReference type="GO" id="GO:0043542">
    <property type="term" value="P:endothelial cell migration"/>
    <property type="evidence" value="ECO:0007669"/>
    <property type="project" value="Ensembl"/>
</dbReference>
<dbReference type="GO" id="GO:0007507">
    <property type="term" value="P:heart development"/>
    <property type="evidence" value="ECO:0007669"/>
    <property type="project" value="TreeGrafter"/>
</dbReference>
<dbReference type="GO" id="GO:0033622">
    <property type="term" value="P:integrin activation"/>
    <property type="evidence" value="ECO:0007669"/>
    <property type="project" value="Ensembl"/>
</dbReference>
<dbReference type="GO" id="GO:0007229">
    <property type="term" value="P:integrin-mediated signaling pathway"/>
    <property type="evidence" value="ECO:0007669"/>
    <property type="project" value="Ensembl"/>
</dbReference>
<dbReference type="GO" id="GO:0150102">
    <property type="term" value="P:negative regulation of monocyte activation"/>
    <property type="evidence" value="ECO:0007669"/>
    <property type="project" value="Ensembl"/>
</dbReference>
<dbReference type="GO" id="GO:0071635">
    <property type="term" value="P:negative regulation of transforming growth factor beta production"/>
    <property type="evidence" value="ECO:0007669"/>
    <property type="project" value="Ensembl"/>
</dbReference>
<dbReference type="GO" id="GO:1901166">
    <property type="term" value="P:neural crest cell migration involved in autonomic nervous system development"/>
    <property type="evidence" value="ECO:0007669"/>
    <property type="project" value="Ensembl"/>
</dbReference>
<dbReference type="GO" id="GO:0045773">
    <property type="term" value="P:positive regulation of axon extension"/>
    <property type="evidence" value="ECO:0007669"/>
    <property type="project" value="Ensembl"/>
</dbReference>
<dbReference type="GO" id="GO:0048146">
    <property type="term" value="P:positive regulation of fibroblast proliferation"/>
    <property type="evidence" value="ECO:0007669"/>
    <property type="project" value="Ensembl"/>
</dbReference>
<dbReference type="GO" id="GO:0010628">
    <property type="term" value="P:positive regulation of gene expression"/>
    <property type="evidence" value="ECO:0007669"/>
    <property type="project" value="Ensembl"/>
</dbReference>
<dbReference type="GO" id="GO:0051897">
    <property type="term" value="P:positive regulation of phosphatidylinositol 3-kinase/protein kinase B signal transduction"/>
    <property type="evidence" value="ECO:0007669"/>
    <property type="project" value="Ensembl"/>
</dbReference>
<dbReference type="GO" id="GO:1904237">
    <property type="term" value="P:positive regulation of substrate-dependent cell migration, cell attachment to substrate"/>
    <property type="evidence" value="ECO:0007669"/>
    <property type="project" value="Ensembl"/>
</dbReference>
<dbReference type="GO" id="GO:0008360">
    <property type="term" value="P:regulation of cell shape"/>
    <property type="evidence" value="ECO:0007669"/>
    <property type="project" value="UniProtKB-KW"/>
</dbReference>
<dbReference type="GO" id="GO:0070372">
    <property type="term" value="P:regulation of ERK1 and ERK2 cascade"/>
    <property type="evidence" value="ECO:0007669"/>
    <property type="project" value="Ensembl"/>
</dbReference>
<dbReference type="GO" id="GO:0014850">
    <property type="term" value="P:response to muscle activity"/>
    <property type="evidence" value="ECO:0007669"/>
    <property type="project" value="Ensembl"/>
</dbReference>
<dbReference type="GO" id="GO:0034446">
    <property type="term" value="P:substrate adhesion-dependent cell spreading"/>
    <property type="evidence" value="ECO:0007669"/>
    <property type="project" value="Ensembl"/>
</dbReference>
<dbReference type="GO" id="GO:0042060">
    <property type="term" value="P:wound healing"/>
    <property type="evidence" value="ECO:0007669"/>
    <property type="project" value="Ensembl"/>
</dbReference>
<dbReference type="CDD" id="cd00061">
    <property type="entry name" value="FN1"/>
    <property type="match status" value="12"/>
</dbReference>
<dbReference type="CDD" id="cd00062">
    <property type="entry name" value="FN2"/>
    <property type="match status" value="2"/>
</dbReference>
<dbReference type="CDD" id="cd00063">
    <property type="entry name" value="FN3"/>
    <property type="match status" value="17"/>
</dbReference>
<dbReference type="FunFam" id="2.10.70.10:FF:000004">
    <property type="entry name" value="Fibronectin 1"/>
    <property type="match status" value="1"/>
</dbReference>
<dbReference type="FunFam" id="2.10.70.10:FF:000006">
    <property type="entry name" value="Fibronectin 1"/>
    <property type="match status" value="3"/>
</dbReference>
<dbReference type="FunFam" id="2.10.70.10:FF:000007">
    <property type="entry name" value="Fibronectin 1"/>
    <property type="match status" value="2"/>
</dbReference>
<dbReference type="FunFam" id="2.10.70.10:FF:000018">
    <property type="entry name" value="Fibronectin 1"/>
    <property type="match status" value="1"/>
</dbReference>
<dbReference type="FunFam" id="2.60.40.10:FF:000099">
    <property type="entry name" value="Fibronectin 1"/>
    <property type="match status" value="3"/>
</dbReference>
<dbReference type="FunFam" id="2.60.40.10:FF:000417">
    <property type="entry name" value="Fibronectin 1"/>
    <property type="match status" value="1"/>
</dbReference>
<dbReference type="FunFam" id="2.60.40.10:FF:000579">
    <property type="entry name" value="Fibronectin 1"/>
    <property type="match status" value="1"/>
</dbReference>
<dbReference type="FunFam" id="2.60.40.10:FF:000622">
    <property type="entry name" value="Fibronectin 1"/>
    <property type="match status" value="1"/>
</dbReference>
<dbReference type="FunFam" id="2.60.40.10:FF:001069">
    <property type="entry name" value="Fibronectin 1"/>
    <property type="match status" value="1"/>
</dbReference>
<dbReference type="FunFam" id="2.10.10.10:FF:000001">
    <property type="entry name" value="Fibronectin 1a isoform 1"/>
    <property type="match status" value="2"/>
</dbReference>
<dbReference type="FunFam" id="2.10.70.10:FF:000017">
    <property type="entry name" value="Fibronectin isoform X1"/>
    <property type="match status" value="1"/>
</dbReference>
<dbReference type="FunFam" id="2.60.40.10:FF:000227">
    <property type="entry name" value="Fibronectin isoform X1"/>
    <property type="match status" value="1"/>
</dbReference>
<dbReference type="FunFam" id="2.10.70.10:FF:000020">
    <property type="entry name" value="fibronectin isoform X1"/>
    <property type="match status" value="1"/>
</dbReference>
<dbReference type="FunFam" id="2.10.70.10:FF:000021">
    <property type="entry name" value="fibronectin isoform X1"/>
    <property type="match status" value="1"/>
</dbReference>
<dbReference type="FunFam" id="2.10.70.10:FF:000022">
    <property type="entry name" value="fibronectin isoform X1"/>
    <property type="match status" value="1"/>
</dbReference>
<dbReference type="FunFam" id="2.60.40.10:FF:000275">
    <property type="entry name" value="fibronectin isoform X1"/>
    <property type="match status" value="1"/>
</dbReference>
<dbReference type="FunFam" id="2.60.40.10:FF:000300">
    <property type="entry name" value="fibronectin isoform X1"/>
    <property type="match status" value="1"/>
</dbReference>
<dbReference type="FunFam" id="2.60.40.10:FF:000306">
    <property type="entry name" value="fibronectin isoform X1"/>
    <property type="match status" value="1"/>
</dbReference>
<dbReference type="FunFam" id="2.60.40.10:FF:000317">
    <property type="entry name" value="fibronectin isoform X1"/>
    <property type="match status" value="1"/>
</dbReference>
<dbReference type="FunFam" id="2.60.40.10:FF:000336">
    <property type="entry name" value="fibronectin isoform X1"/>
    <property type="match status" value="1"/>
</dbReference>
<dbReference type="FunFam" id="2.60.40.10:FF:000364">
    <property type="entry name" value="fibronectin isoform X1"/>
    <property type="match status" value="1"/>
</dbReference>
<dbReference type="FunFam" id="2.60.40.10:FF:000382">
    <property type="entry name" value="fibronectin isoform X1"/>
    <property type="match status" value="1"/>
</dbReference>
<dbReference type="FunFam" id="2.60.40.10:FF:000447">
    <property type="entry name" value="fibronectin isoform X1"/>
    <property type="match status" value="1"/>
</dbReference>
<dbReference type="FunFam" id="2.60.40.10:FF:000433">
    <property type="entry name" value="fibronectin isoform X5"/>
    <property type="match status" value="1"/>
</dbReference>
<dbReference type="Gene3D" id="2.10.70.10">
    <property type="entry name" value="Complement Module, domain 1"/>
    <property type="match status" value="12"/>
</dbReference>
<dbReference type="Gene3D" id="2.10.10.10">
    <property type="entry name" value="Fibronectin, type II, collagen-binding"/>
    <property type="match status" value="2"/>
</dbReference>
<dbReference type="Gene3D" id="2.60.40.10">
    <property type="entry name" value="Immunoglobulins"/>
    <property type="match status" value="17"/>
</dbReference>
<dbReference type="InterPro" id="IPR050991">
    <property type="entry name" value="ECM_Regulatory_Proteins"/>
</dbReference>
<dbReference type="InterPro" id="IPR000083">
    <property type="entry name" value="Fibronectin_type1"/>
</dbReference>
<dbReference type="InterPro" id="IPR003961">
    <property type="entry name" value="FN3_dom"/>
</dbReference>
<dbReference type="InterPro" id="IPR036116">
    <property type="entry name" value="FN3_sf"/>
</dbReference>
<dbReference type="InterPro" id="IPR000562">
    <property type="entry name" value="FN_type2_dom"/>
</dbReference>
<dbReference type="InterPro" id="IPR036943">
    <property type="entry name" value="FN_type2_sf"/>
</dbReference>
<dbReference type="InterPro" id="IPR013783">
    <property type="entry name" value="Ig-like_fold"/>
</dbReference>
<dbReference type="InterPro" id="IPR013806">
    <property type="entry name" value="Kringle-like"/>
</dbReference>
<dbReference type="PANTHER" id="PTHR46708:SF8">
    <property type="entry name" value="FIBRONECTIN"/>
    <property type="match status" value="1"/>
</dbReference>
<dbReference type="PANTHER" id="PTHR46708">
    <property type="entry name" value="TENASCIN"/>
    <property type="match status" value="1"/>
</dbReference>
<dbReference type="Pfam" id="PF00039">
    <property type="entry name" value="fn1"/>
    <property type="match status" value="11"/>
</dbReference>
<dbReference type="Pfam" id="PF00040">
    <property type="entry name" value="fn2"/>
    <property type="match status" value="2"/>
</dbReference>
<dbReference type="Pfam" id="PF00041">
    <property type="entry name" value="fn3"/>
    <property type="match status" value="17"/>
</dbReference>
<dbReference type="PRINTS" id="PR00013">
    <property type="entry name" value="FNTYPEII"/>
</dbReference>
<dbReference type="SMART" id="SM00058">
    <property type="entry name" value="FN1"/>
    <property type="match status" value="12"/>
</dbReference>
<dbReference type="SMART" id="SM00059">
    <property type="entry name" value="FN2"/>
    <property type="match status" value="2"/>
</dbReference>
<dbReference type="SMART" id="SM00060">
    <property type="entry name" value="FN3"/>
    <property type="match status" value="17"/>
</dbReference>
<dbReference type="SUPFAM" id="SSF49265">
    <property type="entry name" value="Fibronectin type III"/>
    <property type="match status" value="11"/>
</dbReference>
<dbReference type="SUPFAM" id="SSF57603">
    <property type="entry name" value="FnI-like domain"/>
    <property type="match status" value="12"/>
</dbReference>
<dbReference type="SUPFAM" id="SSF57440">
    <property type="entry name" value="Kringle-like"/>
    <property type="match status" value="2"/>
</dbReference>
<dbReference type="PROSITE" id="PS00022">
    <property type="entry name" value="EGF_1"/>
    <property type="match status" value="2"/>
</dbReference>
<dbReference type="PROSITE" id="PS01253">
    <property type="entry name" value="FN1_1"/>
    <property type="match status" value="12"/>
</dbReference>
<dbReference type="PROSITE" id="PS51091">
    <property type="entry name" value="FN1_2"/>
    <property type="match status" value="12"/>
</dbReference>
<dbReference type="PROSITE" id="PS00023">
    <property type="entry name" value="FN2_1"/>
    <property type="match status" value="2"/>
</dbReference>
<dbReference type="PROSITE" id="PS51092">
    <property type="entry name" value="FN2_2"/>
    <property type="match status" value="2"/>
</dbReference>
<dbReference type="PROSITE" id="PS50853">
    <property type="entry name" value="FN3"/>
    <property type="match status" value="17"/>
</dbReference>
<gene>
    <name evidence="2" type="primary">FN1</name>
</gene>
<accession>Q28749</accession>
<accession>G1U9R6</accession>
<comment type="function">
    <text evidence="2 4">Fibronectins bind cell surfaces and various compounds including collagen, fibrin, heparin, DNA, and actin. Fibronectins are involved in cell adhesion, cell motility, opsonization, wound healing, and maintenance of cell shape (By similarity). Involved in osteoblast compaction through the fibronectin fibrillogenesis cell-mediated matrix assembly process, essential for osteoblast mineralization. Participates in the regulation of type I collagen deposition by osteoblasts (By similarity).</text>
</comment>
<comment type="function">
    <text evidence="4">Secreted by contracting muscle, induces liver autophagy, a degradative pathway for nutrient mobilization and damage removal, and systemic insulin sensitization via hepatic ITGA5:ITGB1 integrin receptor signaling.</text>
</comment>
<comment type="subunit">
    <text evidence="1 2 4">Mostly heterodimers or multimers of alternatively spliced variants, connected by 2 disulfide bonds near the carboxyl ends; to a lesser extent homodimers. Interacts with FBLN1, AMBP, TNR, LGALS3BP and COL13A1. Interacts with FBLN7 (By similarity). Interacts with COMP. Interacts (via type III repeats 9-14) with TNFAIP6 (via CUB domain); this interaction enhances fibronectin fibril assembly. TNFAIP6 may act as a bridging molecule between FN1 and THBS1 (By similarity). Interacts with TNR; the interaction inhibits cell adhesion and neurite outgrowth (By similarity). Interacts with FST3 and MYOC (By similarity). Interacts with SVEP1 (By similarity).</text>
</comment>
<comment type="subcellular location">
    <subcellularLocation>
        <location evidence="4">Secreted</location>
        <location evidence="4">Extracellular space</location>
        <location evidence="4">Extracellular matrix</location>
    </subcellularLocation>
    <subcellularLocation>
        <location evidence="4">Secreted</location>
    </subcellularLocation>
</comment>
<comment type="alternative products">
    <event type="alternative splicing"/>
    <isoform>
        <id>Q28749-1</id>
        <name>1</name>
        <sequence type="displayed"/>
    </isoform>
    <text evidence="12">A number of isoforms are produced. The diversity of isoforms depends on the V region and either of the two extra domains which can be either included or excluded (partially or completely for the V region).</text>
</comment>
<comment type="tissue specificity">
    <text evidence="11">Expressed in the glomeruli of the renal cortex at 7 days of age, continues to be expressed in glomerula crescents at 14 days of age.</text>
</comment>
<comment type="PTM">
    <text evidence="2">Sulfated.</text>
</comment>
<comment type="PTM">
    <text evidence="4">Forms covalent cross-links mediated by a transglutaminase, such as F13A or TGM2, between a glutamine and the epsilon-amino group of a lysine residue, forming homopolymers and heteropolymers (e.g. fibrinogen-fibronectin, collagen-fibronectin heteropolymers).</text>
</comment>
<comment type="PTM">
    <text evidence="4">Some lysine residues are oxidized to allysine by LOXL3, promoting fibronectin activation and matrix formation.</text>
</comment>
<comment type="PTM">
    <text evidence="3">Serotonylated on Gln residues by TGM2 in response to hypoxia.</text>
</comment>
<proteinExistence type="evidence at transcript level"/>
<sequence>GCYDNGKHYQINQQWERTYLGNALVCTCYGGSRGFNCESKPEPEETCFDKYTGNTYRVGDTYERPKDSMIWDCTCIGAGRGRISCTIANRCHEGGQSYKIGDTWRRPHETGGYMLECVCLGNGKGEWTCKPIAEKCFDHAAGTSYVVGETWEKPYQGWMMVDCTCLGEGSGRITCTSRNRCNDQDTRTSYRIGDTWSKKDNRGNLLQCICTGNGRGEWKCERHASLQTTSTGSGPFSDVRAAVYQPQPHPQPAPYGHCVTDSGVVYSEGMQWLKTQGNKQMLCTCLGNGVSCQETAVTQTYGGNSNGEPCVLPFTYNGRTFYSCTTEGRQDGHLWCSTTSNYEQDQKYSFCTDHTVLVQTRGGNSNGALCHFPFLYNNHNYTDCTSEGRRDNMKWCGTTQNYDADQKFGFCPMAAHEEICTTNEGVMYRIGDQWDKQHDMGHMMRCTCVGNGRGEWTCVAYSQLRDQCIVDDITYNVNDTFHKRHEEGHMLNCTCFGQGRGRWKCDPVDQCQDSETRTFYQIGDSWEKYVHGVRYQCYCYGRGIGEWHCQPLQTYPGTSGPVQVIITETPSQPNSHPIQWNAPEPSHISKYILRWRPKNSVGRWKEATIPGHLNSYTIKGLRPGVMYEGQLISIQQYGHREVTRFDFTTTSTSTPVTSNTVTGETTPLSPVVATSESVTEITASSFVVSWVSASDTVSGFLVEYELSEEGDEPKYLDLPSTVTSVNIPDLLPGRKYIVNVYQISEEGKQSLILSTSQTTAPDAPPDPTVDQVDDTSIVVRWSRPQAPITGYRVVYSPSVEGSSTELNLPETANSVTLSDLQPGVQYNITIYAVEENQESAPVFIQQETTGVPRSDEVPPPKDLQFVEVTDVKVTIMWTPPDSAVTGYRVDVLPVHLPGENGQRLPVSRNTFAEITGLSPGVTYYFKVFAVNHGRESRPLTAQQATKLDAPTNLQFVNETDSSVLVIWTPPRARITGYQLTIGPTRGGQPKQHNVGPTVSKYLLRNLQPGSEYTVTLIAVKGNNQSPKVTGVFTTLQPQSSIPPYSTEVTETSIVITWTPAPRIGFKLGVRPSQGGEAPREVTSESGSIVVSGLTPGVEYVYSIQVLRDGKERDAPIVNTVVTPLSPPTNLHLEANPDTGVLTVSWEKSTTPDITGYRITTTPTNGQQGYSLEEVVHADQNSCIFENLSPGLEYNVSVYTVKDDKESVPVSDTIIPEVPQLTDLSFVDITDSSIGLRWTPLNSSTIIGYRITVVAAGEGIPIFEDFVDSSVGYYTVTGLEPGIDYDISVITLINGGESAPTTLTQQTAVPSPTDLRFTNIGPDTMRVTWAPPPSIELTNFLVRYSPVKNEEDVAELSISPSDNAVVLTNLLPGTEYLVSVSSVYEQHESTPVRGRQKTGLDAPTGIDFSDVTPNSFTVYWTPPRAPITGFWIRHHPEHGVGRPREDRVPPSRNSITLTNLNPGTEYVVSIVALNGREQSPPLIGQQSTVSDVPRDLEVIASTPTSLLISWEAPAVTVRYYRITYGETGGNSPVQEFTVPGSKSTATISGLKPGADYTITVYAVTGRGDSPASSKPISIDYHTEIDKPSQMQVTDVQDNSISVRWLPSSSPVTGYRVTTTPKNGAGPTKTKTAGPDQTEMTIEGLQPTVEYVVSVYAQNRNGESQPLVQTAVTNIDRPKGLAFTDVDVDSIKIAWESPQGQVSRYRVTYSSPEDGIHELFPAPDGEEDTAELQGLRPGSEYTVSVVALHDDMESQPLIGTQSTAIPAPTNLKFTQVTPTSLSAQWTPPNVQLTGYRVRVTPKEKTGPMKEINLAPDSSSVVVSGLMVATKYEVSVYALKDTLTSRPVQGVITTLENVSPPRRARVTDATETTITISWRTKTETITGFRVDAIPANGQNPIQRIIKPDVRSYTITGLQPGTDYKIHLYTLNDNAQSSPVIIDASTAIDAPSNLHFLATTPNSLLVSWQPPRAKITGYIIKFEKPGSPPREVVPRPRPGVTEATITGLEPGTEYTIYIIALKNNQKSDPLIGRKKTDELPQLVTLPHPNLHGPEILDVPSTVQKTPFITNPGYDTGNGIQLPGTSGQQPSVGQQMIFEEHGFRRTTPPTTATPVKLRPRPYLPNVDEDIQIGHVPRGDVDYHLYPHVLGLNPNASTGQEALSQTTISWTPFQESSEYIISCHPVGTDEQPLQFRVPGTSTSATLTGLTRGATYNIIVEALKDQRRHKVREEVVTVGNSVNEGLNQPTDDSCFDPYTVTHYAVGEEWERLSESGFKLSCQCLGFGSGHFKCDSSKWCHDNGVNYKIGEKWDRQGENGQMMSCTCLGNGKGEFKCDPHEATCYDDGKTYHVGEQWQKEYLGAICSCTCFGGQRGWRCDNCRRPGVEPSPDSSTGHSYNQYTQRYHQRTNTNVNCPIECFMPLDVQADREDSRE</sequence>
<name>FINC_RABIT</name>